<protein>
    <recommendedName>
        <fullName evidence="1">Large ribosomal subunit protein bL9</fullName>
    </recommendedName>
    <alternativeName>
        <fullName evidence="2">50S ribosomal protein L9</fullName>
    </alternativeName>
</protein>
<organism>
    <name type="scientific">Borrelia garinii subsp. bavariensis (strain ATCC BAA-2496 / DSM 23469 / PBi)</name>
    <name type="common">Borreliella bavariensis</name>
    <dbReference type="NCBI Taxonomy" id="290434"/>
    <lineage>
        <taxon>Bacteria</taxon>
        <taxon>Pseudomonadati</taxon>
        <taxon>Spirochaetota</taxon>
        <taxon>Spirochaetia</taxon>
        <taxon>Spirochaetales</taxon>
        <taxon>Borreliaceae</taxon>
        <taxon>Borreliella</taxon>
    </lineage>
</organism>
<keyword id="KW-0687">Ribonucleoprotein</keyword>
<keyword id="KW-0689">Ribosomal protein</keyword>
<keyword id="KW-0694">RNA-binding</keyword>
<keyword id="KW-0699">rRNA-binding</keyword>
<evidence type="ECO:0000255" key="1">
    <source>
        <dbReference type="HAMAP-Rule" id="MF_00503"/>
    </source>
</evidence>
<evidence type="ECO:0000305" key="2"/>
<accession>Q662Q0</accession>
<reference key="1">
    <citation type="journal article" date="2004" name="Nucleic Acids Res.">
        <title>Comparative analysis of the Borrelia garinii genome.</title>
        <authorList>
            <person name="Gloeckner G."/>
            <person name="Lehmann R."/>
            <person name="Romualdi A."/>
            <person name="Pradella S."/>
            <person name="Schulte-Spechtel U."/>
            <person name="Schilhabel M."/>
            <person name="Wilske B."/>
            <person name="Suehnel J."/>
            <person name="Platzer M."/>
        </authorList>
    </citation>
    <scope>NUCLEOTIDE SEQUENCE [LARGE SCALE GENOMIC DNA]</scope>
    <source>
        <strain>ATCC BAA-2496 / DSM 23469 / PBi</strain>
    </source>
</reference>
<feature type="chain" id="PRO_0000236493" description="Large ribosomal subunit protein bL9">
    <location>
        <begin position="1"/>
        <end position="166"/>
    </location>
</feature>
<sequence>MKVILKEDFTNLGREGDTVEVKDGFARNYLLPKGFAVFSNKHNVEIFNQKKRSILKKQETKKQIANDLKSKLDLVKLEFFMKSNDSGKLFHSINSLNIAEELLKLGFDIERKKIDIHHGTLKAFGTYDVTVKLYEGISAIIKVEIKKEKKQEDKKSLNKKLNKVDE</sequence>
<name>RL9_BORGP</name>
<gene>
    <name evidence="1" type="primary">rplI</name>
    <name type="ordered locus">BG0113</name>
</gene>
<comment type="function">
    <text evidence="1">Binds to the 23S rRNA.</text>
</comment>
<comment type="similarity">
    <text evidence="1">Belongs to the bacterial ribosomal protein bL9 family.</text>
</comment>
<dbReference type="EMBL" id="CP000013">
    <property type="protein sequence ID" value="AAU06971.1"/>
    <property type="molecule type" value="Genomic_DNA"/>
</dbReference>
<dbReference type="RefSeq" id="WP_011193464.1">
    <property type="nucleotide sequence ID" value="NZ_CP028872.1"/>
</dbReference>
<dbReference type="SMR" id="Q662Q0"/>
<dbReference type="GeneID" id="45160908"/>
<dbReference type="KEGG" id="bga:BG0113"/>
<dbReference type="eggNOG" id="COG0359">
    <property type="taxonomic scope" value="Bacteria"/>
</dbReference>
<dbReference type="HOGENOM" id="CLU_078938_3_0_12"/>
<dbReference type="OrthoDB" id="9788336at2"/>
<dbReference type="Proteomes" id="UP000002276">
    <property type="component" value="Chromosome"/>
</dbReference>
<dbReference type="GO" id="GO:1990904">
    <property type="term" value="C:ribonucleoprotein complex"/>
    <property type="evidence" value="ECO:0007669"/>
    <property type="project" value="UniProtKB-KW"/>
</dbReference>
<dbReference type="GO" id="GO:0005840">
    <property type="term" value="C:ribosome"/>
    <property type="evidence" value="ECO:0007669"/>
    <property type="project" value="UniProtKB-KW"/>
</dbReference>
<dbReference type="GO" id="GO:0019843">
    <property type="term" value="F:rRNA binding"/>
    <property type="evidence" value="ECO:0007669"/>
    <property type="project" value="UniProtKB-UniRule"/>
</dbReference>
<dbReference type="GO" id="GO:0003735">
    <property type="term" value="F:structural constituent of ribosome"/>
    <property type="evidence" value="ECO:0007669"/>
    <property type="project" value="InterPro"/>
</dbReference>
<dbReference type="GO" id="GO:0006412">
    <property type="term" value="P:translation"/>
    <property type="evidence" value="ECO:0007669"/>
    <property type="project" value="UniProtKB-UniRule"/>
</dbReference>
<dbReference type="FunFam" id="3.40.5.10:FF:000003">
    <property type="entry name" value="50S ribosomal protein L9"/>
    <property type="match status" value="1"/>
</dbReference>
<dbReference type="Gene3D" id="3.10.430.100">
    <property type="entry name" value="Ribosomal protein L9, C-terminal domain"/>
    <property type="match status" value="1"/>
</dbReference>
<dbReference type="Gene3D" id="3.40.5.10">
    <property type="entry name" value="Ribosomal protein L9, N-terminal domain"/>
    <property type="match status" value="1"/>
</dbReference>
<dbReference type="HAMAP" id="MF_00503">
    <property type="entry name" value="Ribosomal_bL9"/>
    <property type="match status" value="1"/>
</dbReference>
<dbReference type="InterPro" id="IPR000244">
    <property type="entry name" value="Ribosomal_bL9"/>
</dbReference>
<dbReference type="InterPro" id="IPR009027">
    <property type="entry name" value="Ribosomal_bL9/RNase_H1_N"/>
</dbReference>
<dbReference type="InterPro" id="IPR020594">
    <property type="entry name" value="Ribosomal_bL9_bac/chp"/>
</dbReference>
<dbReference type="InterPro" id="IPR020069">
    <property type="entry name" value="Ribosomal_bL9_C"/>
</dbReference>
<dbReference type="InterPro" id="IPR036791">
    <property type="entry name" value="Ribosomal_bL9_C_sf"/>
</dbReference>
<dbReference type="InterPro" id="IPR020070">
    <property type="entry name" value="Ribosomal_bL9_N"/>
</dbReference>
<dbReference type="InterPro" id="IPR036935">
    <property type="entry name" value="Ribosomal_bL9_N_sf"/>
</dbReference>
<dbReference type="NCBIfam" id="TIGR00158">
    <property type="entry name" value="L9"/>
    <property type="match status" value="1"/>
</dbReference>
<dbReference type="PANTHER" id="PTHR21368">
    <property type="entry name" value="50S RIBOSOMAL PROTEIN L9"/>
    <property type="match status" value="1"/>
</dbReference>
<dbReference type="Pfam" id="PF03948">
    <property type="entry name" value="Ribosomal_L9_C"/>
    <property type="match status" value="1"/>
</dbReference>
<dbReference type="Pfam" id="PF01281">
    <property type="entry name" value="Ribosomal_L9_N"/>
    <property type="match status" value="1"/>
</dbReference>
<dbReference type="SUPFAM" id="SSF55658">
    <property type="entry name" value="L9 N-domain-like"/>
    <property type="match status" value="1"/>
</dbReference>
<dbReference type="SUPFAM" id="SSF55653">
    <property type="entry name" value="Ribosomal protein L9 C-domain"/>
    <property type="match status" value="1"/>
</dbReference>
<dbReference type="PROSITE" id="PS00651">
    <property type="entry name" value="RIBOSOMAL_L9"/>
    <property type="match status" value="1"/>
</dbReference>
<proteinExistence type="inferred from homology"/>